<protein>
    <recommendedName>
        <fullName>U17-barytoxin-Tl1a</fullName>
        <shortName>U17-BATX-Tl1a</shortName>
    </recommendedName>
    <alternativeName>
        <fullName evidence="3">Toxin ICK-35</fullName>
    </alternativeName>
</protein>
<reference key="1">
    <citation type="journal article" date="2013" name="Toxins">
        <title>A proteomics and transcriptomics investigation of the venom from the barychelid spider Trittame loki (brush-foot trapdoor).</title>
        <authorList>
            <person name="Undheim E.A."/>
            <person name="Sunagar K."/>
            <person name="Herzig V."/>
            <person name="Kely L."/>
            <person name="Low D.H."/>
            <person name="Jackson T.N."/>
            <person name="Jones A."/>
            <person name="Kurniawan N."/>
            <person name="King G.F."/>
            <person name="Ali S.A."/>
            <person name="Antunes A."/>
            <person name="Ruder T."/>
            <person name="Fry B.G."/>
        </authorList>
    </citation>
    <scope>NUCLEOTIDE SEQUENCE [MRNA]</scope>
    <source>
        <tissue>Venom gland</tissue>
    </source>
</reference>
<name>ICK35_TRILK</name>
<sequence length="114" mass="12891">MKTIIVFLSLLVLATKFGDANEGVNQEQMKEVIQNEFREDFLNEMAAMSLLQQLEAIESTLLEKEADRNSRQKRCLGENVPCGDFPCCGKLVCQKTFGYGWLYKSPYCVKPSNG</sequence>
<comment type="function">
    <text evidence="4">Ion channel inhibitor.</text>
</comment>
<comment type="subcellular location">
    <subcellularLocation>
        <location evidence="1">Secreted</location>
    </subcellularLocation>
</comment>
<comment type="tissue specificity">
    <text>Expressed by the venom gland.</text>
</comment>
<comment type="domain">
    <text evidence="1">The presence of a 'disulfide through disulfide knot' structurally defines this protein as a knottin.</text>
</comment>
<comment type="similarity">
    <text evidence="4">Belongs to the neurotoxin 14 (magi-1) family. 03 (ICK-30-40) subfamily.</text>
</comment>
<proteinExistence type="evidence at transcript level"/>
<evidence type="ECO:0000250" key="1"/>
<evidence type="ECO:0000255" key="2"/>
<evidence type="ECO:0000303" key="3">
    <source>
    </source>
</evidence>
<evidence type="ECO:0000305" key="4"/>
<organism>
    <name type="scientific">Trittame loki</name>
    <name type="common">Brush-footed trapdoor spider</name>
    <dbReference type="NCBI Taxonomy" id="1295018"/>
    <lineage>
        <taxon>Eukaryota</taxon>
        <taxon>Metazoa</taxon>
        <taxon>Ecdysozoa</taxon>
        <taxon>Arthropoda</taxon>
        <taxon>Chelicerata</taxon>
        <taxon>Arachnida</taxon>
        <taxon>Araneae</taxon>
        <taxon>Mygalomorphae</taxon>
        <taxon>Barychelidae</taxon>
        <taxon>Trittame</taxon>
    </lineage>
</organism>
<dbReference type="EMBL" id="GAQE01000038">
    <property type="protein sequence ID" value="JAB84516.1"/>
    <property type="molecule type" value="Transcribed_RNA"/>
</dbReference>
<dbReference type="SMR" id="W4VS12"/>
<dbReference type="TCDB" id="8.B.6.2.3">
    <property type="family name" value="the ca(2+) channel-targeting spider toxin (cst) family"/>
</dbReference>
<dbReference type="ArachnoServer" id="AS001527">
    <property type="toxin name" value="U17-barytoxin-Tl1a"/>
</dbReference>
<dbReference type="GO" id="GO:0005576">
    <property type="term" value="C:extracellular region"/>
    <property type="evidence" value="ECO:0007669"/>
    <property type="project" value="UniProtKB-SubCell"/>
</dbReference>
<dbReference type="GO" id="GO:0019871">
    <property type="term" value="F:sodium channel inhibitor activity"/>
    <property type="evidence" value="ECO:0007669"/>
    <property type="project" value="InterPro"/>
</dbReference>
<dbReference type="GO" id="GO:0090729">
    <property type="term" value="F:toxin activity"/>
    <property type="evidence" value="ECO:0007669"/>
    <property type="project" value="UniProtKB-KW"/>
</dbReference>
<dbReference type="InterPro" id="IPR012627">
    <property type="entry name" value="Toxin_22"/>
</dbReference>
<dbReference type="Pfam" id="PF08092">
    <property type="entry name" value="Toxin_22"/>
    <property type="match status" value="1"/>
</dbReference>
<feature type="signal peptide" evidence="2">
    <location>
        <begin position="1"/>
        <end position="20"/>
    </location>
</feature>
<feature type="propeptide" id="PRO_0000435158" evidence="4">
    <location>
        <begin position="21"/>
        <end position="74"/>
    </location>
</feature>
<feature type="chain" id="PRO_0000429242" description="U17-barytoxin-Tl1a">
    <location>
        <begin position="75"/>
        <end position="114"/>
    </location>
</feature>
<feature type="disulfide bond" evidence="1">
    <location>
        <begin position="75"/>
        <end position="88"/>
    </location>
</feature>
<feature type="disulfide bond" evidence="1">
    <location>
        <begin position="82"/>
        <end position="93"/>
    </location>
</feature>
<feature type="disulfide bond" evidence="1">
    <location>
        <begin position="87"/>
        <end position="108"/>
    </location>
</feature>
<accession>W4VS12</accession>
<keyword id="KW-0165">Cleavage on pair of basic residues</keyword>
<keyword id="KW-1015">Disulfide bond</keyword>
<keyword id="KW-0872">Ion channel impairing toxin</keyword>
<keyword id="KW-0960">Knottin</keyword>
<keyword id="KW-0964">Secreted</keyword>
<keyword id="KW-0732">Signal</keyword>
<keyword id="KW-0800">Toxin</keyword>